<gene>
    <name evidence="1" type="primary">recR</name>
    <name type="ordered locus">FMG_0514</name>
</gene>
<proteinExistence type="inferred from homology"/>
<sequence length="202" mass="22874">MSLYPKAMDELIKNLSNLPTIGRKSARRLAYRIIDMDPKKVDELVESIVNVKTNIRPCANCGNLTDKKLCDICSDQKRDNSVITVVEDSMNVISIEKTGEYNGKYHVLGGLLSPRDNIAPQDLNLENLFLRCKKDYVKEVILALSPTTNGDLTTNFIIEVLKNEEYNVKVSRIAMGVPLGANLEYYDEMSLYKAILDRREIK</sequence>
<dbReference type="EMBL" id="AP008971">
    <property type="protein sequence ID" value="BAG07932.1"/>
    <property type="molecule type" value="Genomic_DNA"/>
</dbReference>
<dbReference type="RefSeq" id="WP_002835347.1">
    <property type="nucleotide sequence ID" value="NC_010376.1"/>
</dbReference>
<dbReference type="SMR" id="B0S0K8"/>
<dbReference type="STRING" id="334413.FMG_0514"/>
<dbReference type="KEGG" id="fma:FMG_0514"/>
<dbReference type="eggNOG" id="COG0353">
    <property type="taxonomic scope" value="Bacteria"/>
</dbReference>
<dbReference type="HOGENOM" id="CLU_060739_1_0_9"/>
<dbReference type="Proteomes" id="UP000001319">
    <property type="component" value="Chromosome"/>
</dbReference>
<dbReference type="GO" id="GO:0003677">
    <property type="term" value="F:DNA binding"/>
    <property type="evidence" value="ECO:0007669"/>
    <property type="project" value="UniProtKB-UniRule"/>
</dbReference>
<dbReference type="GO" id="GO:0008270">
    <property type="term" value="F:zinc ion binding"/>
    <property type="evidence" value="ECO:0007669"/>
    <property type="project" value="UniProtKB-KW"/>
</dbReference>
<dbReference type="GO" id="GO:0006310">
    <property type="term" value="P:DNA recombination"/>
    <property type="evidence" value="ECO:0007669"/>
    <property type="project" value="UniProtKB-UniRule"/>
</dbReference>
<dbReference type="GO" id="GO:0006281">
    <property type="term" value="P:DNA repair"/>
    <property type="evidence" value="ECO:0007669"/>
    <property type="project" value="UniProtKB-UniRule"/>
</dbReference>
<dbReference type="CDD" id="cd01025">
    <property type="entry name" value="TOPRIM_recR"/>
    <property type="match status" value="1"/>
</dbReference>
<dbReference type="Gene3D" id="3.30.60.80">
    <property type="match status" value="1"/>
</dbReference>
<dbReference type="Gene3D" id="3.40.1360.10">
    <property type="match status" value="1"/>
</dbReference>
<dbReference type="Gene3D" id="6.10.250.240">
    <property type="match status" value="1"/>
</dbReference>
<dbReference type="Gene3D" id="1.10.8.420">
    <property type="entry name" value="RecR Domain 1"/>
    <property type="match status" value="1"/>
</dbReference>
<dbReference type="HAMAP" id="MF_00017">
    <property type="entry name" value="RecR"/>
    <property type="match status" value="1"/>
</dbReference>
<dbReference type="InterPro" id="IPR000093">
    <property type="entry name" value="DNA_Rcmb_RecR"/>
</dbReference>
<dbReference type="InterPro" id="IPR023627">
    <property type="entry name" value="Rcmb_RecR"/>
</dbReference>
<dbReference type="InterPro" id="IPR015967">
    <property type="entry name" value="Rcmb_RecR_Znf"/>
</dbReference>
<dbReference type="InterPro" id="IPR006171">
    <property type="entry name" value="TOPRIM_dom"/>
</dbReference>
<dbReference type="InterPro" id="IPR034137">
    <property type="entry name" value="TOPRIM_RecR"/>
</dbReference>
<dbReference type="NCBIfam" id="TIGR00615">
    <property type="entry name" value="recR"/>
    <property type="match status" value="1"/>
</dbReference>
<dbReference type="PANTHER" id="PTHR30446">
    <property type="entry name" value="RECOMBINATION PROTEIN RECR"/>
    <property type="match status" value="1"/>
</dbReference>
<dbReference type="PANTHER" id="PTHR30446:SF0">
    <property type="entry name" value="RECOMBINATION PROTEIN RECR"/>
    <property type="match status" value="1"/>
</dbReference>
<dbReference type="Pfam" id="PF21175">
    <property type="entry name" value="RecR_C"/>
    <property type="match status" value="1"/>
</dbReference>
<dbReference type="Pfam" id="PF21176">
    <property type="entry name" value="RecR_HhH"/>
    <property type="match status" value="1"/>
</dbReference>
<dbReference type="Pfam" id="PF02132">
    <property type="entry name" value="RecR_ZnF"/>
    <property type="match status" value="1"/>
</dbReference>
<dbReference type="Pfam" id="PF13662">
    <property type="entry name" value="Toprim_4"/>
    <property type="match status" value="1"/>
</dbReference>
<dbReference type="SMART" id="SM00493">
    <property type="entry name" value="TOPRIM"/>
    <property type="match status" value="1"/>
</dbReference>
<dbReference type="SUPFAM" id="SSF111304">
    <property type="entry name" value="Recombination protein RecR"/>
    <property type="match status" value="1"/>
</dbReference>
<dbReference type="PROSITE" id="PS01300">
    <property type="entry name" value="RECR"/>
    <property type="match status" value="1"/>
</dbReference>
<dbReference type="PROSITE" id="PS50880">
    <property type="entry name" value="TOPRIM"/>
    <property type="match status" value="1"/>
</dbReference>
<keyword id="KW-0227">DNA damage</keyword>
<keyword id="KW-0233">DNA recombination</keyword>
<keyword id="KW-0234">DNA repair</keyword>
<keyword id="KW-0479">Metal-binding</keyword>
<keyword id="KW-1185">Reference proteome</keyword>
<keyword id="KW-0862">Zinc</keyword>
<keyword id="KW-0863">Zinc-finger</keyword>
<protein>
    <recommendedName>
        <fullName evidence="1">Recombination protein RecR</fullName>
    </recommendedName>
</protein>
<accession>B0S0K8</accession>
<feature type="chain" id="PRO_1000195391" description="Recombination protein RecR">
    <location>
        <begin position="1"/>
        <end position="202"/>
    </location>
</feature>
<feature type="domain" description="Toprim" evidence="1">
    <location>
        <begin position="81"/>
        <end position="178"/>
    </location>
</feature>
<feature type="zinc finger region" description="C4-type" evidence="1">
    <location>
        <begin position="58"/>
        <end position="73"/>
    </location>
</feature>
<organism>
    <name type="scientific">Finegoldia magna (strain ATCC 29328 / DSM 20472 / WAL 2508)</name>
    <name type="common">Peptostreptococcus magnus</name>
    <dbReference type="NCBI Taxonomy" id="334413"/>
    <lineage>
        <taxon>Bacteria</taxon>
        <taxon>Bacillati</taxon>
        <taxon>Bacillota</taxon>
        <taxon>Tissierellia</taxon>
        <taxon>Tissierellales</taxon>
        <taxon>Peptoniphilaceae</taxon>
        <taxon>Finegoldia</taxon>
    </lineage>
</organism>
<reference key="1">
    <citation type="journal article" date="2008" name="DNA Res.">
        <title>Complete genome sequence of Finegoldia magna, an anaerobic opportunistic pathogen.</title>
        <authorList>
            <person name="Goto T."/>
            <person name="Yamashita A."/>
            <person name="Hirakawa H."/>
            <person name="Matsutani M."/>
            <person name="Todo K."/>
            <person name="Ohshima K."/>
            <person name="Toh H."/>
            <person name="Miyamoto K."/>
            <person name="Kuhara S."/>
            <person name="Hattori M."/>
            <person name="Shimizu T."/>
            <person name="Akimoto S."/>
        </authorList>
    </citation>
    <scope>NUCLEOTIDE SEQUENCE [LARGE SCALE GENOMIC DNA]</scope>
    <source>
        <strain>ATCC 29328 / DSM 20472 / WAL 2508</strain>
    </source>
</reference>
<evidence type="ECO:0000255" key="1">
    <source>
        <dbReference type="HAMAP-Rule" id="MF_00017"/>
    </source>
</evidence>
<comment type="function">
    <text evidence="1">May play a role in DNA repair. It seems to be involved in an RecBC-independent recombinational process of DNA repair. It may act with RecF and RecO.</text>
</comment>
<comment type="similarity">
    <text evidence="1">Belongs to the RecR family.</text>
</comment>
<name>RECR_FINM2</name>